<gene>
    <name evidence="10" type="primary">afoE</name>
    <name type="ORF">AN1034</name>
</gene>
<sequence>MTRASASGSGHEASTVFLFGPHVGTFTKASMDKLVRPLSQSPQRDWILRTIADLPTYWDALAAKMPDIARDIDGPTSLSELDRWLRHSLDTAGLSVSDDESLPSILVGPLVVLIQLTQYWRHLEMIRDGSAPAVDLQAELVQQTQSGSRPTVILGFCAGLLAALSVASARNQAGFEEYGAVAVRLAMLIGALIDAQEVWDKASGKGSSASYAVAWRGQKQEDEMNRIIGDLSNDAYVAVRYDQARATVTASETIAPLLMKRLRAAGVTVAEVGIKGQIHSPNADRKQHTNALVELCASLPGLQYAEVSKLALQTYDNQGSGIPVSGSGNMTEMVVRSILVQQCRWFDTFSAVADALPDPYVVTFGLERCVPPTLMRTLGGRQVFYEDLPKDPEKPSFWLTPQSSPPPQPQLQPVLQLQQQQTTRVEPVMPVSPQSEPIAIVGMSVKTAGADDLDEFVAMLKTGQSQHIPITRDRLMHDMLFRENADADPKRKFYGCFFRDGDAFDHKFFKRSPRESAAMDPQSRIVLQAAYQAVEQSGYFVEDHNGYTPDGRDKMHVGVYLGSCGVDYEHNISCYDPNAFTATGALKSFITGRVSHHFGWTGPCMTFDTACSSSAVAIHTACRNLLSGECTAALAGGSNTVTNMNWFQNLAAGSFVSPTGQCKPFDDDADGYCRAEGAAFVYLKRLSDALRDGNQVIATIAASAVYQNENCTPLFVPNSPSLSHLFKDVMRQAKVTANDVSLVEAHGTGTPVGDPAEYESILAALGGPSRKKKLPIGSVKGHIGHTEGASGAIALVKIIMMMREGFIPPQASFKTMNKKIPVKADDNIEVVTRLRAWEEERKTALLNNYGACGSNASMIVTQPDLRGPHSRSHAVAGARYPFWIPGLDTRAITAYCAKLGPWLRSRAEEPTLADISFNLSRQSNRGLPQGFIFNARSLAELHEKIEQAVAAAPSSKDAAASVGIAPVKAERPVILCFGGQISRFVGLDRGLFDAVALFRKHLDAVDTVVKAQGLVSIYAAPDIFSREPIEDTVKLQTMLFAMQYACAQTWIDCGLNGKVQALVGHSFGEITALCVAGTLSLDETVRLVAARAKLVRDSWGADRGAMMALEGDEGLVHQLLSEANGASGSDGSASIACYNGPRSFTIAGSTSAVDQVQQTISRPEFGSIKGKRLNVTNAFHSSLVDKISDGLDSIGKTLTFNSPLIPVERATEVASARATDASFVSQHMRQPVFFNHAVQRLAKRHPQAIFLEAGSSSTITVMAGRAIAQGQASSESHYFQAVSITNETALDSLADTTTALWKQGLRVTFWAHDAVQTAEYAHLLLPPYQFDTSSRHWLPMKSPVEKVKEAALALIAANGGSLAGAGLQGQQAGTPQDPRTLPVWEFVGYQDDETRQARFRVNTSADKYNRYVLSHVIAQTAPICPGTLECDIVIEALFSLEPGWRQDGVQPVVREMINHSPICKDPSRVVYLDLTATNKRRTNWTVRIFSLDDDATKKTPEIHAEATVEMRSSSDQAHVREFANFERLVSHKQCTDLLRLSLDQDTDEGVEVLQGRNVYRAFSSIVDYGEVYRGVKYVVGKGTECAGRVQLPRSSRGDTWLDVPLSDSFSQVGGVWVNLMTDLPSSDMFIATGCELSMRSPRAPPREDADVWHVYARHSRQGDKAIMTDLFVFDAVSGQLVEIMLGVQYMRVAKASMSMMLARMTKDDSVLRTKALVPGPTPAAAFQAALKTAPEVRASSEPGAKVKASKTSKKEKKEKKPVTKAKSKSSKPSGWRDITEEVRNLVATVSGIDASELELDAEMADFGIDSLMGMELGKEVEAAFKCTLDQNEQMEATSLRKFVQCVSNALFGPNAGPAEAEDDEDEEKSDNSSSESASESDDAGSESSDTGILTPTGEEEQPLPLKAVAIHKSAGLAAIAPPVESRLALSSSDILASFGQVKMQTDTLMKEYGVDKTEGVMLSGSNRLCTALVVEAMDELGCPLRTASPGQPLARVAFLPQHGRLMQWVYEFLERDARLINIDPASGQITRTHITAPRKTSQVILQEVLASDPGFAVPNRLAYYAGQQLAGVLSGSTDGIRVLFGSPEGRELTAAMYCEHTFNCMSYAQMREVTNLLAERIGRTGETLKVLEMGAGTGGTTLIMAPFLATLAESGALPIEYTFTDISPSMVANARRRFSKQYPFMRFAVHDIEKPPADELRNQHLVLASNAIHATHNLGVSLSNIHQALRPDGFLMMLEMTEVVPFVDLVFGLLEGWWLFDDGRHHAVVPAEHWESELHRAGFGHVDWTDGNLPENTFQKVIIALASGAQGARLPKPGPVQTLIPELNRENVEARTATAESLVAKYTAGWETPKLRALASRAEKESGKTQAPHAAPGRRAHEAVVIVTGATGSLGSHIVQRLAETPSVATVVCLNRRSSSTTPEKRQQAALTARGITLSPGARAKLRVLETDTSKPQLGLPPLEYGWLLENATDIIHNAWPMSGTRPVSAFEPQLQAMRNLLDLARDIAERPFNGSSRVGFQFISSIGVVGFCGQSRVSEDRVPLSAALPSGYGEAKWICERMVDETLHRHPGLFRAMVVRPGQISGSSTSGFWNPVEHFAFLVKSSQSLRAWPDLQGQMQWIPVDYCAAGVVDLLHLTSRGDEAYPVYHMDNPVGQNWQAMNHVLASALDIPASNIIPFKTWISRVRRSPLPMETENPAARLVDFLDDHFERMSCGGLVLDTSKAKEHSTTMAGVGPVGTELARLQYQARSSLLISLEKLQCVYHSVANYSVLVTMGLRRRSSIATPYTPQI</sequence>
<keyword id="KW-0012">Acyltransferase</keyword>
<keyword id="KW-0511">Multifunctional enzyme</keyword>
<keyword id="KW-0521">NADP</keyword>
<keyword id="KW-0596">Phosphopantetheine</keyword>
<keyword id="KW-0597">Phosphoprotein</keyword>
<keyword id="KW-1185">Reference proteome</keyword>
<keyword id="KW-0949">S-adenosyl-L-methionine</keyword>
<keyword id="KW-0808">Transferase</keyword>
<reference key="1">
    <citation type="journal article" date="2005" name="Nature">
        <title>Sequencing of Aspergillus nidulans and comparative analysis with A. fumigatus and A. oryzae.</title>
        <authorList>
            <person name="Galagan J.E."/>
            <person name="Calvo S.E."/>
            <person name="Cuomo C."/>
            <person name="Ma L.-J."/>
            <person name="Wortman J.R."/>
            <person name="Batzoglou S."/>
            <person name="Lee S.-I."/>
            <person name="Bastuerkmen M."/>
            <person name="Spevak C.C."/>
            <person name="Clutterbuck J."/>
            <person name="Kapitonov V."/>
            <person name="Jurka J."/>
            <person name="Scazzocchio C."/>
            <person name="Farman M.L."/>
            <person name="Butler J."/>
            <person name="Purcell S."/>
            <person name="Harris S."/>
            <person name="Braus G.H."/>
            <person name="Draht O."/>
            <person name="Busch S."/>
            <person name="D'Enfert C."/>
            <person name="Bouchier C."/>
            <person name="Goldman G.H."/>
            <person name="Bell-Pedersen D."/>
            <person name="Griffiths-Jones S."/>
            <person name="Doonan J.H."/>
            <person name="Yu J."/>
            <person name="Vienken K."/>
            <person name="Pain A."/>
            <person name="Freitag M."/>
            <person name="Selker E.U."/>
            <person name="Archer D.B."/>
            <person name="Penalva M.A."/>
            <person name="Oakley B.R."/>
            <person name="Momany M."/>
            <person name="Tanaka T."/>
            <person name="Kumagai T."/>
            <person name="Asai K."/>
            <person name="Machida M."/>
            <person name="Nierman W.C."/>
            <person name="Denning D.W."/>
            <person name="Caddick M.X."/>
            <person name="Hynes M."/>
            <person name="Paoletti M."/>
            <person name="Fischer R."/>
            <person name="Miller B.L."/>
            <person name="Dyer P.S."/>
            <person name="Sachs M.S."/>
            <person name="Osmani S.A."/>
            <person name="Birren B.W."/>
        </authorList>
    </citation>
    <scope>NUCLEOTIDE SEQUENCE [LARGE SCALE GENOMIC DNA]</scope>
    <source>
        <strain>FGSC A4 / ATCC 38163 / CBS 112.46 / NRRL 194 / M139</strain>
    </source>
</reference>
<reference key="2">
    <citation type="journal article" date="2009" name="Fungal Genet. Biol.">
        <title>The 2008 update of the Aspergillus nidulans genome annotation: a community effort.</title>
        <authorList>
            <person name="Wortman J.R."/>
            <person name="Gilsenan J.M."/>
            <person name="Joardar V."/>
            <person name="Deegan J."/>
            <person name="Clutterbuck J."/>
            <person name="Andersen M.R."/>
            <person name="Archer D."/>
            <person name="Bencina M."/>
            <person name="Braus G."/>
            <person name="Coutinho P."/>
            <person name="von Dohren H."/>
            <person name="Doonan J."/>
            <person name="Driessen A.J."/>
            <person name="Durek P."/>
            <person name="Espeso E."/>
            <person name="Fekete E."/>
            <person name="Flipphi M."/>
            <person name="Estrada C.G."/>
            <person name="Geysens S."/>
            <person name="Goldman G."/>
            <person name="de Groot P.W."/>
            <person name="Hansen K."/>
            <person name="Harris S.D."/>
            <person name="Heinekamp T."/>
            <person name="Helmstaedt K."/>
            <person name="Henrissat B."/>
            <person name="Hofmann G."/>
            <person name="Homan T."/>
            <person name="Horio T."/>
            <person name="Horiuchi H."/>
            <person name="James S."/>
            <person name="Jones M."/>
            <person name="Karaffa L."/>
            <person name="Karanyi Z."/>
            <person name="Kato M."/>
            <person name="Keller N."/>
            <person name="Kelly D.E."/>
            <person name="Kiel J.A."/>
            <person name="Kim J.M."/>
            <person name="van der Klei I.J."/>
            <person name="Klis F.M."/>
            <person name="Kovalchuk A."/>
            <person name="Krasevec N."/>
            <person name="Kubicek C.P."/>
            <person name="Liu B."/>
            <person name="Maccabe A."/>
            <person name="Meyer V."/>
            <person name="Mirabito P."/>
            <person name="Miskei M."/>
            <person name="Mos M."/>
            <person name="Mullins J."/>
            <person name="Nelson D.R."/>
            <person name="Nielsen J."/>
            <person name="Oakley B.R."/>
            <person name="Osmani S.A."/>
            <person name="Pakula T."/>
            <person name="Paszewski A."/>
            <person name="Paulsen I."/>
            <person name="Pilsyk S."/>
            <person name="Pocsi I."/>
            <person name="Punt P.J."/>
            <person name="Ram A.F."/>
            <person name="Ren Q."/>
            <person name="Robellet X."/>
            <person name="Robson G."/>
            <person name="Seiboth B."/>
            <person name="van Solingen P."/>
            <person name="Specht T."/>
            <person name="Sun J."/>
            <person name="Taheri-Talesh N."/>
            <person name="Takeshita N."/>
            <person name="Ussery D."/>
            <person name="vanKuyk P.A."/>
            <person name="Visser H."/>
            <person name="van de Vondervoort P.J."/>
            <person name="de Vries R.P."/>
            <person name="Walton J."/>
            <person name="Xiang X."/>
            <person name="Xiong Y."/>
            <person name="Zeng A.P."/>
            <person name="Brandt B.W."/>
            <person name="Cornell M.J."/>
            <person name="van den Hondel C.A."/>
            <person name="Visser J."/>
            <person name="Oliver S.G."/>
            <person name="Turner G."/>
        </authorList>
    </citation>
    <scope>GENOME REANNOTATION</scope>
    <source>
        <strain>FGSC A4 / ATCC 38163 / CBS 112.46 / NRRL 194 / M139</strain>
    </source>
</reference>
<reference key="3">
    <citation type="journal article" date="2009" name="J. Am. Chem. Soc.">
        <title>A gene cluster containing two fungal polyketide synthases encodes the biosynthetic pathway for a polyketide, asperfuranone, in Aspergillus nidulans.</title>
        <authorList>
            <person name="Chiang Y.M."/>
            <person name="Szewczyk E."/>
            <person name="Davidson A.D."/>
            <person name="Keller N."/>
            <person name="Oakley B.R."/>
            <person name="Wang C.C."/>
        </authorList>
    </citation>
    <scope>FUNCTION</scope>
    <scope>DISRUPTION PHENOTYPE</scope>
    <scope>PATHWAY</scope>
</reference>
<reference key="4">
    <citation type="journal article" date="2010" name="Basic Clin. Pharmacol. Toxicol.">
        <title>Asperfuranone from Aspergillus nidulans inhibits proliferation of human non-small cell lung cancer A549 cells via blocking cell cycle progression and inducing apoptosis.</title>
        <authorList>
            <person name="Wang C.C."/>
            <person name="Chiang Y.M."/>
            <person name="Praseuth M.B."/>
            <person name="Kuo P.L."/>
            <person name="Liang H.L."/>
            <person name="Hsu Y.L."/>
        </authorList>
    </citation>
    <scope>BIOTECHNOLOGY</scope>
</reference>
<reference key="5">
    <citation type="journal article" date="2012" name="J. Am. Chem. Soc.">
        <title>Illuminating the diversity of aromatic polyketide synthases in Aspergillus nidulans.</title>
        <authorList>
            <person name="Ahuja M."/>
            <person name="Chiang Y.M."/>
            <person name="Chang S.L."/>
            <person name="Praseuth M.B."/>
            <person name="Entwistle R."/>
            <person name="Sanchez J.F."/>
            <person name="Lo H.C."/>
            <person name="Yeh H.H."/>
            <person name="Oakley B.R."/>
            <person name="Wang C.C."/>
        </authorList>
    </citation>
    <scope>DOMAIN</scope>
    <scope>FUNCTION</scope>
    <scope>CATALYTIC ACTIVITY</scope>
    <scope>PATHWAY</scope>
</reference>
<protein>
    <recommendedName>
        <fullName evidence="10">Iterative polyketide synthase afoE</fullName>
        <ecNumber evidence="9">2.3.1.-</ecNumber>
    </recommendedName>
    <alternativeName>
        <fullName evidence="10">Asperfuranone biosynthesis protein B</fullName>
    </alternativeName>
</protein>
<feature type="chain" id="PRO_0000436373" description="Iterative polyketide synthase afoE">
    <location>
        <begin position="1"/>
        <end position="2793"/>
    </location>
</feature>
<feature type="domain" description="Ketosynthase family 3 (KS3)" evidence="4">
    <location>
        <begin position="435"/>
        <end position="862"/>
    </location>
</feature>
<feature type="domain" description="PKS/mFAS DH" evidence="5">
    <location>
        <begin position="1384"/>
        <end position="1698"/>
    </location>
</feature>
<feature type="domain" description="Carrier" evidence="3">
    <location>
        <begin position="1776"/>
        <end position="1850"/>
    </location>
</feature>
<feature type="region of interest" description="N-terminal acylcarrier protein transacylase domain (SAT)" evidence="1">
    <location>
        <begin position="1"/>
        <end position="401"/>
    </location>
</feature>
<feature type="region of interest" description="Malonyl-CoA:ACP transacylase (MAT)" evidence="2">
    <location>
        <begin position="977"/>
        <end position="1265"/>
    </location>
</feature>
<feature type="region of interest" description="N-terminal hotdog fold" evidence="5">
    <location>
        <begin position="1384"/>
        <end position="1515"/>
    </location>
</feature>
<feature type="region of interest" description="Product template (PT) domain" evidence="2">
    <location>
        <begin position="1411"/>
        <end position="1696"/>
    </location>
</feature>
<feature type="region of interest" description="C-terminal hotdog fold" evidence="5">
    <location>
        <begin position="1550"/>
        <end position="1698"/>
    </location>
</feature>
<feature type="region of interest" description="Disordered" evidence="6">
    <location>
        <begin position="1734"/>
        <end position="1776"/>
    </location>
</feature>
<feature type="region of interest" description="Disordered" evidence="6">
    <location>
        <begin position="1853"/>
        <end position="1903"/>
    </location>
</feature>
<feature type="region of interest" description="Methyltransferase domain" evidence="2">
    <location>
        <begin position="2115"/>
        <end position="2294"/>
    </location>
</feature>
<feature type="region of interest" description="Disordered" evidence="6">
    <location>
        <begin position="2360"/>
        <end position="2379"/>
    </location>
</feature>
<feature type="region of interest" description="NADPH-binding domain" evidence="2">
    <location>
        <begin position="2387"/>
        <end position="2630"/>
    </location>
</feature>
<feature type="compositionally biased region" description="Basic residues" evidence="6">
    <location>
        <begin position="1747"/>
        <end position="1769"/>
    </location>
</feature>
<feature type="compositionally biased region" description="Acidic residues" evidence="6">
    <location>
        <begin position="1859"/>
        <end position="1868"/>
    </location>
</feature>
<feature type="active site" description="Nucleophile; for transacylase activity" evidence="1">
    <location>
        <position position="157"/>
    </location>
</feature>
<feature type="active site" description="Proton donor/acceptor; for transacylase activity" evidence="1">
    <location>
        <position position="279"/>
    </location>
</feature>
<feature type="active site" description="For beta-ketoacyl synthase activity" evidence="4">
    <location>
        <position position="611"/>
    </location>
</feature>
<feature type="active site" description="For beta-ketoacyl synthase activity" evidence="4">
    <location>
        <position position="746"/>
    </location>
</feature>
<feature type="active site" description="For beta-ketoacyl synthase activity" evidence="4">
    <location>
        <position position="785"/>
    </location>
</feature>
<feature type="active site" description="Proton acceptor; for dehydratase activity" evidence="5">
    <location>
        <position position="1415"/>
    </location>
</feature>
<feature type="active site" description="Proton donor; for dehydratase activity" evidence="5">
    <location>
        <position position="1607"/>
    </location>
</feature>
<feature type="modified residue" description="O-(pantetheine 4'-phosphoryl)serine" evidence="3">
    <location>
        <position position="1810"/>
    </location>
</feature>
<accession>Q5BEJ6</accession>
<accession>C8VTX9</accession>
<proteinExistence type="evidence at protein level"/>
<evidence type="ECO:0000250" key="1">
    <source>
        <dbReference type="UniProtKB" id="A0A0K0MCJ4"/>
    </source>
</evidence>
<evidence type="ECO:0000255" key="2"/>
<evidence type="ECO:0000255" key="3">
    <source>
        <dbReference type="PROSITE-ProRule" id="PRU00258"/>
    </source>
</evidence>
<evidence type="ECO:0000255" key="4">
    <source>
        <dbReference type="PROSITE-ProRule" id="PRU01348"/>
    </source>
</evidence>
<evidence type="ECO:0000255" key="5">
    <source>
        <dbReference type="PROSITE-ProRule" id="PRU01363"/>
    </source>
</evidence>
<evidence type="ECO:0000256" key="6">
    <source>
        <dbReference type="SAM" id="MobiDB-lite"/>
    </source>
</evidence>
<evidence type="ECO:0000269" key="7">
    <source>
    </source>
</evidence>
<evidence type="ECO:0000269" key="8">
    <source>
    </source>
</evidence>
<evidence type="ECO:0000269" key="9">
    <source>
    </source>
</evidence>
<evidence type="ECO:0000303" key="10">
    <source>
    </source>
</evidence>
<evidence type="ECO:0000305" key="11">
    <source>
    </source>
</evidence>
<evidence type="ECO:0000305" key="12">
    <source>
    </source>
</evidence>
<comment type="function">
    <text evidence="7 9">Iterative polyketide synthase; part of the gene cluster that mediates the biosynthesis of asperfuranone, a probable antitumor agent (PubMed:19199437). The polyketide synthase afoG is responsible for producing the 3,5-dimethyloctadienone moiety from acetyl-CoA, three malonyl-CoA, and two S-adenosyl methionines (SAM) (PubMed:19199437). The 3,5-dimethyloctadienone moiety is then loaded onto the SAT domain of afoE and extended with four malonyl-CoA and one SAM, which leads to the formation of 2,4-dihydroxy-6-(5,7-dimethyl-2-oxo-trans-3-trans-5-nonadienyl)-3-methylbenzaldehyde (compound 2) after reductive release and aldol condensation (PubMed:19199437, PubMed:22510154). AfoD is the next enzyme in the biosynthesis sequence and hydroxylates the side chain at the benzylic position of compound 2 (PubMed:19199437). After benzylic hydroxylation, a furan ring is formed after five-member ring hemiacetal formation and water elimination (PubMed:19199437). AfoF and afoC are proposed to oxidize the R-diketone proton and to reduce the unconjugated carbonyl group, respectively, to generate asperfuranone (PubMed:19199437). Since no intermediates could be isolated from afoF and afoC deletants, the sequence of these two enzymes is not fully understood (PubMed:19199437). Moreover, since afoC deletant still produces a small amount of asperfuranone, other endogenous oxidoreductases might catalyze the same reaction with much less efficiency (PubMed:19199437).</text>
</comment>
<comment type="catalytic activity">
    <reaction evidence="9">
        <text>(3E,5E,7S)-5,7-dimethyl-2-oxonona-3,5-dienyl-[ACP] + 4 malonyl-CoA + AH2 + S-adenosyl-L-methionine + 3 H(+) = 6-[(3E,5E,7S)-5,7-dimethyl-2-oxonona-3,5-dienyl]-2,4-dihydroxy-3-methylbenzaldehyde + holo-[ACP] + A + S-adenosyl-L-homocysteine + 4 CO2 + 4 CoA + H2O</text>
        <dbReference type="Rhea" id="RHEA:64512"/>
        <dbReference type="Rhea" id="RHEA-COMP:9685"/>
        <dbReference type="Rhea" id="RHEA-COMP:16614"/>
        <dbReference type="ChEBI" id="CHEBI:13193"/>
        <dbReference type="ChEBI" id="CHEBI:15377"/>
        <dbReference type="ChEBI" id="CHEBI:15378"/>
        <dbReference type="ChEBI" id="CHEBI:16526"/>
        <dbReference type="ChEBI" id="CHEBI:17499"/>
        <dbReference type="ChEBI" id="CHEBI:57287"/>
        <dbReference type="ChEBI" id="CHEBI:57384"/>
        <dbReference type="ChEBI" id="CHEBI:57856"/>
        <dbReference type="ChEBI" id="CHEBI:59789"/>
        <dbReference type="ChEBI" id="CHEBI:64479"/>
        <dbReference type="ChEBI" id="CHEBI:155861"/>
        <dbReference type="ChEBI" id="CHEBI:155871"/>
    </reaction>
    <physiologicalReaction direction="left-to-right" evidence="9">
        <dbReference type="Rhea" id="RHEA:64513"/>
    </physiologicalReaction>
</comment>
<comment type="cofactor">
    <cofactor evidence="2">
        <name>pantetheine 4'-phosphate</name>
        <dbReference type="ChEBI" id="CHEBI:47942"/>
    </cofactor>
    <text evidence="2">Binds 1 phosphopantetheine covalently.</text>
</comment>
<comment type="pathway">
    <text evidence="7 9">Secondary metabolite biosynthesis.</text>
</comment>
<comment type="induction">
    <text evidence="7">Expression is regulated by the asperfuranone cluster transcription factor afoA (PubMed:19199437).</text>
</comment>
<comment type="domain">
    <text evidence="11 12">Multidomain protein; including an N-terminal starter unit:ACP transacylase (SAT) domain, a beta-ketoacyl synthase (KS) domain, a malonyl-CoA:ACP transacylase (MAT) domain, a product template domain, a acyl carrier protein (ACP) domain, a methyltransferase domain and a reductive NADPH-binding domain that is required for NADPH-dependent product release.</text>
</comment>
<comment type="disruption phenotype">
    <text evidence="7">Completely abolishes the production of asperfuranone (PubMed:19199437).</text>
</comment>
<comment type="biotechnology">
    <text evidence="8">Asperfuranone provides anti-proliferative activity in human non-small cell lung cancer cells (PubMed:20148857).</text>
</comment>
<organism>
    <name type="scientific">Emericella nidulans (strain FGSC A4 / ATCC 38163 / CBS 112.46 / NRRL 194 / M139)</name>
    <name type="common">Aspergillus nidulans</name>
    <dbReference type="NCBI Taxonomy" id="227321"/>
    <lineage>
        <taxon>Eukaryota</taxon>
        <taxon>Fungi</taxon>
        <taxon>Dikarya</taxon>
        <taxon>Ascomycota</taxon>
        <taxon>Pezizomycotina</taxon>
        <taxon>Eurotiomycetes</taxon>
        <taxon>Eurotiomycetidae</taxon>
        <taxon>Eurotiales</taxon>
        <taxon>Aspergillaceae</taxon>
        <taxon>Aspergillus</taxon>
        <taxon>Aspergillus subgen. Nidulantes</taxon>
    </lineage>
</organism>
<name>AFOE_EMENI</name>
<dbReference type="EC" id="2.3.1.-" evidence="9"/>
<dbReference type="EMBL" id="BN001308">
    <property type="protein sequence ID" value="CBF88295.1"/>
    <property type="molecule type" value="Genomic_DNA"/>
</dbReference>
<dbReference type="EMBL" id="AACD01000015">
    <property type="protein sequence ID" value="EAA65602.1"/>
    <property type="molecule type" value="Genomic_DNA"/>
</dbReference>
<dbReference type="RefSeq" id="XP_658638.1">
    <property type="nucleotide sequence ID" value="XM_653546.1"/>
</dbReference>
<dbReference type="SMR" id="Q5BEJ6"/>
<dbReference type="STRING" id="227321.Q5BEJ6"/>
<dbReference type="EnsemblFungi" id="CBF88295">
    <property type="protein sequence ID" value="CBF88295"/>
    <property type="gene ID" value="ANIA_01034"/>
</dbReference>
<dbReference type="KEGG" id="ani:ANIA_01034"/>
<dbReference type="eggNOG" id="KOG1178">
    <property type="taxonomic scope" value="Eukaryota"/>
</dbReference>
<dbReference type="eggNOG" id="KOG1202">
    <property type="taxonomic scope" value="Eukaryota"/>
</dbReference>
<dbReference type="HOGENOM" id="CLU_000022_6_2_1"/>
<dbReference type="InParanoid" id="Q5BEJ6"/>
<dbReference type="OMA" id="VWHVYAR"/>
<dbReference type="OrthoDB" id="329835at2759"/>
<dbReference type="Proteomes" id="UP000000560">
    <property type="component" value="Chromosome VIII"/>
</dbReference>
<dbReference type="GO" id="GO:0004315">
    <property type="term" value="F:3-oxoacyl-[acyl-carrier-protein] synthase activity"/>
    <property type="evidence" value="ECO:0007669"/>
    <property type="project" value="InterPro"/>
</dbReference>
<dbReference type="GO" id="GO:0004312">
    <property type="term" value="F:fatty acid synthase activity"/>
    <property type="evidence" value="ECO:0000318"/>
    <property type="project" value="GO_Central"/>
</dbReference>
<dbReference type="GO" id="GO:0031177">
    <property type="term" value="F:phosphopantetheine binding"/>
    <property type="evidence" value="ECO:0007669"/>
    <property type="project" value="InterPro"/>
</dbReference>
<dbReference type="GO" id="GO:0006633">
    <property type="term" value="P:fatty acid biosynthetic process"/>
    <property type="evidence" value="ECO:0000318"/>
    <property type="project" value="GO_Central"/>
</dbReference>
<dbReference type="GO" id="GO:0044550">
    <property type="term" value="P:secondary metabolite biosynthetic process"/>
    <property type="evidence" value="ECO:0000318"/>
    <property type="project" value="GO_Central"/>
</dbReference>
<dbReference type="CDD" id="cd02440">
    <property type="entry name" value="AdoMet_MTases"/>
    <property type="match status" value="1"/>
</dbReference>
<dbReference type="CDD" id="cd00833">
    <property type="entry name" value="PKS"/>
    <property type="match status" value="1"/>
</dbReference>
<dbReference type="Gene3D" id="3.30.70.3290">
    <property type="match status" value="1"/>
</dbReference>
<dbReference type="Gene3D" id="3.40.47.10">
    <property type="match status" value="1"/>
</dbReference>
<dbReference type="Gene3D" id="1.10.1200.10">
    <property type="entry name" value="ACP-like"/>
    <property type="match status" value="1"/>
</dbReference>
<dbReference type="Gene3D" id="3.40.366.10">
    <property type="entry name" value="Malonyl-Coenzyme A Acyl Carrier Protein, domain 2"/>
    <property type="match status" value="2"/>
</dbReference>
<dbReference type="Gene3D" id="3.40.50.720">
    <property type="entry name" value="NAD(P)-binding Rossmann-like Domain"/>
    <property type="match status" value="1"/>
</dbReference>
<dbReference type="Gene3D" id="3.10.129.110">
    <property type="entry name" value="Polyketide synthase dehydratase"/>
    <property type="match status" value="1"/>
</dbReference>
<dbReference type="Gene3D" id="3.40.50.150">
    <property type="entry name" value="Vaccinia Virus protein VP39"/>
    <property type="match status" value="1"/>
</dbReference>
<dbReference type="InterPro" id="IPR001227">
    <property type="entry name" value="Ac_transferase_dom_sf"/>
</dbReference>
<dbReference type="InterPro" id="IPR036736">
    <property type="entry name" value="ACP-like_sf"/>
</dbReference>
<dbReference type="InterPro" id="IPR014043">
    <property type="entry name" value="Acyl_transferase_dom"/>
</dbReference>
<dbReference type="InterPro" id="IPR016035">
    <property type="entry name" value="Acyl_Trfase/lysoPLipase"/>
</dbReference>
<dbReference type="InterPro" id="IPR013120">
    <property type="entry name" value="Far_NAD-bd"/>
</dbReference>
<dbReference type="InterPro" id="IPR018201">
    <property type="entry name" value="Ketoacyl_synth_AS"/>
</dbReference>
<dbReference type="InterPro" id="IPR014031">
    <property type="entry name" value="Ketoacyl_synth_C"/>
</dbReference>
<dbReference type="InterPro" id="IPR014030">
    <property type="entry name" value="Ketoacyl_synth_N"/>
</dbReference>
<dbReference type="InterPro" id="IPR016036">
    <property type="entry name" value="Malonyl_transacylase_ACP-bd"/>
</dbReference>
<dbReference type="InterPro" id="IPR013217">
    <property type="entry name" value="Methyltransf_12"/>
</dbReference>
<dbReference type="InterPro" id="IPR036291">
    <property type="entry name" value="NAD(P)-bd_dom_sf"/>
</dbReference>
<dbReference type="InterPro" id="IPR020841">
    <property type="entry name" value="PKS_Beta-ketoAc_synthase_dom"/>
</dbReference>
<dbReference type="InterPro" id="IPR042104">
    <property type="entry name" value="PKS_dehydratase_sf"/>
</dbReference>
<dbReference type="InterPro" id="IPR049900">
    <property type="entry name" value="PKS_mFAS_DH"/>
</dbReference>
<dbReference type="InterPro" id="IPR020806">
    <property type="entry name" value="PKS_PP-bd"/>
</dbReference>
<dbReference type="InterPro" id="IPR050444">
    <property type="entry name" value="Polyketide_Synthase"/>
</dbReference>
<dbReference type="InterPro" id="IPR009081">
    <property type="entry name" value="PP-bd_ACP"/>
</dbReference>
<dbReference type="InterPro" id="IPR006162">
    <property type="entry name" value="Ppantetheine_attach_site"/>
</dbReference>
<dbReference type="InterPro" id="IPR029063">
    <property type="entry name" value="SAM-dependent_MTases_sf"/>
</dbReference>
<dbReference type="InterPro" id="IPR032088">
    <property type="entry name" value="SAT"/>
</dbReference>
<dbReference type="InterPro" id="IPR016039">
    <property type="entry name" value="Thiolase-like"/>
</dbReference>
<dbReference type="PANTHER" id="PTHR45681:SF6">
    <property type="entry name" value="POLYKETIDE SYNTHASE 37"/>
    <property type="match status" value="1"/>
</dbReference>
<dbReference type="PANTHER" id="PTHR45681">
    <property type="entry name" value="POLYKETIDE SYNTHASE 44-RELATED"/>
    <property type="match status" value="1"/>
</dbReference>
<dbReference type="Pfam" id="PF00698">
    <property type="entry name" value="Acyl_transf_1"/>
    <property type="match status" value="1"/>
</dbReference>
<dbReference type="Pfam" id="PF18558">
    <property type="entry name" value="HTH_51"/>
    <property type="match status" value="1"/>
</dbReference>
<dbReference type="Pfam" id="PF00109">
    <property type="entry name" value="ketoacyl-synt"/>
    <property type="match status" value="1"/>
</dbReference>
<dbReference type="Pfam" id="PF02801">
    <property type="entry name" value="Ketoacyl-synt_C"/>
    <property type="match status" value="1"/>
</dbReference>
<dbReference type="Pfam" id="PF08242">
    <property type="entry name" value="Methyltransf_12"/>
    <property type="match status" value="1"/>
</dbReference>
<dbReference type="Pfam" id="PF07993">
    <property type="entry name" value="NAD_binding_4"/>
    <property type="match status" value="1"/>
</dbReference>
<dbReference type="Pfam" id="PF00550">
    <property type="entry name" value="PP-binding"/>
    <property type="match status" value="1"/>
</dbReference>
<dbReference type="Pfam" id="PF16073">
    <property type="entry name" value="SAT"/>
    <property type="match status" value="1"/>
</dbReference>
<dbReference type="SMART" id="SM00827">
    <property type="entry name" value="PKS_AT"/>
    <property type="match status" value="1"/>
</dbReference>
<dbReference type="SMART" id="SM00825">
    <property type="entry name" value="PKS_KS"/>
    <property type="match status" value="1"/>
</dbReference>
<dbReference type="SMART" id="SM00823">
    <property type="entry name" value="PKS_PP"/>
    <property type="match status" value="1"/>
</dbReference>
<dbReference type="SUPFAM" id="SSF47336">
    <property type="entry name" value="ACP-like"/>
    <property type="match status" value="1"/>
</dbReference>
<dbReference type="SUPFAM" id="SSF52151">
    <property type="entry name" value="FabD/lysophospholipase-like"/>
    <property type="match status" value="1"/>
</dbReference>
<dbReference type="SUPFAM" id="SSF51735">
    <property type="entry name" value="NAD(P)-binding Rossmann-fold domains"/>
    <property type="match status" value="1"/>
</dbReference>
<dbReference type="SUPFAM" id="SSF55048">
    <property type="entry name" value="Probable ACP-binding domain of malonyl-CoA ACP transacylase"/>
    <property type="match status" value="1"/>
</dbReference>
<dbReference type="SUPFAM" id="SSF53335">
    <property type="entry name" value="S-adenosyl-L-methionine-dependent methyltransferases"/>
    <property type="match status" value="1"/>
</dbReference>
<dbReference type="SUPFAM" id="SSF53901">
    <property type="entry name" value="Thiolase-like"/>
    <property type="match status" value="1"/>
</dbReference>
<dbReference type="PROSITE" id="PS50075">
    <property type="entry name" value="CARRIER"/>
    <property type="match status" value="1"/>
</dbReference>
<dbReference type="PROSITE" id="PS00606">
    <property type="entry name" value="KS3_1"/>
    <property type="match status" value="1"/>
</dbReference>
<dbReference type="PROSITE" id="PS52004">
    <property type="entry name" value="KS3_2"/>
    <property type="match status" value="1"/>
</dbReference>
<dbReference type="PROSITE" id="PS00012">
    <property type="entry name" value="PHOSPHOPANTETHEINE"/>
    <property type="match status" value="1"/>
</dbReference>
<dbReference type="PROSITE" id="PS52019">
    <property type="entry name" value="PKS_MFAS_DH"/>
    <property type="match status" value="1"/>
</dbReference>